<dbReference type="EC" id="4.3.2.10"/>
<dbReference type="EC" id="3.5.1.2"/>
<dbReference type="EMBL" id="AY102622">
    <property type="protein sequence ID" value="AAK58487.1"/>
    <property type="molecule type" value="Genomic_DNA"/>
</dbReference>
<dbReference type="EMBL" id="CP000538">
    <property type="protein sequence ID" value="EAQ72789.1"/>
    <property type="molecule type" value="Genomic_DNA"/>
</dbReference>
<dbReference type="SMR" id="A1W0U9"/>
<dbReference type="KEGG" id="cjj:CJJ81176_1332"/>
<dbReference type="eggNOG" id="COG0118">
    <property type="taxonomic scope" value="Bacteria"/>
</dbReference>
<dbReference type="HOGENOM" id="CLU_071837_2_0_7"/>
<dbReference type="UniPathway" id="UPA00031">
    <property type="reaction ID" value="UER00010"/>
</dbReference>
<dbReference type="Proteomes" id="UP000000646">
    <property type="component" value="Chromosome"/>
</dbReference>
<dbReference type="GO" id="GO:0005737">
    <property type="term" value="C:cytoplasm"/>
    <property type="evidence" value="ECO:0007669"/>
    <property type="project" value="UniProtKB-SubCell"/>
</dbReference>
<dbReference type="GO" id="GO:0004359">
    <property type="term" value="F:glutaminase activity"/>
    <property type="evidence" value="ECO:0007669"/>
    <property type="project" value="UniProtKB-EC"/>
</dbReference>
<dbReference type="GO" id="GO:0000107">
    <property type="term" value="F:imidazoleglycerol-phosphate synthase activity"/>
    <property type="evidence" value="ECO:0007669"/>
    <property type="project" value="UniProtKB-UniRule"/>
</dbReference>
<dbReference type="GO" id="GO:0016829">
    <property type="term" value="F:lyase activity"/>
    <property type="evidence" value="ECO:0007669"/>
    <property type="project" value="UniProtKB-KW"/>
</dbReference>
<dbReference type="GO" id="GO:0000105">
    <property type="term" value="P:L-histidine biosynthetic process"/>
    <property type="evidence" value="ECO:0007669"/>
    <property type="project" value="UniProtKB-UniRule"/>
</dbReference>
<dbReference type="CDD" id="cd01748">
    <property type="entry name" value="GATase1_IGP_Synthase"/>
    <property type="match status" value="1"/>
</dbReference>
<dbReference type="FunFam" id="3.40.50.880:FF:000009">
    <property type="entry name" value="Imidazole glycerol phosphate synthase subunit HisH"/>
    <property type="match status" value="1"/>
</dbReference>
<dbReference type="Gene3D" id="3.40.50.880">
    <property type="match status" value="1"/>
</dbReference>
<dbReference type="HAMAP" id="MF_00278">
    <property type="entry name" value="HisH"/>
    <property type="match status" value="1"/>
</dbReference>
<dbReference type="InterPro" id="IPR029062">
    <property type="entry name" value="Class_I_gatase-like"/>
</dbReference>
<dbReference type="InterPro" id="IPR017926">
    <property type="entry name" value="GATASE"/>
</dbReference>
<dbReference type="InterPro" id="IPR010139">
    <property type="entry name" value="Imidazole-glycPsynth_HisH"/>
</dbReference>
<dbReference type="NCBIfam" id="TIGR01855">
    <property type="entry name" value="IMP_synth_hisH"/>
    <property type="match status" value="1"/>
</dbReference>
<dbReference type="PANTHER" id="PTHR42701">
    <property type="entry name" value="IMIDAZOLE GLYCEROL PHOSPHATE SYNTHASE SUBUNIT HISH"/>
    <property type="match status" value="1"/>
</dbReference>
<dbReference type="PANTHER" id="PTHR42701:SF1">
    <property type="entry name" value="IMIDAZOLE GLYCEROL PHOSPHATE SYNTHASE SUBUNIT HISH"/>
    <property type="match status" value="1"/>
</dbReference>
<dbReference type="Pfam" id="PF00117">
    <property type="entry name" value="GATase"/>
    <property type="match status" value="1"/>
</dbReference>
<dbReference type="PIRSF" id="PIRSF000495">
    <property type="entry name" value="Amidotransf_hisH"/>
    <property type="match status" value="1"/>
</dbReference>
<dbReference type="SUPFAM" id="SSF52317">
    <property type="entry name" value="Class I glutamine amidotransferase-like"/>
    <property type="match status" value="1"/>
</dbReference>
<dbReference type="PROSITE" id="PS51273">
    <property type="entry name" value="GATASE_TYPE_1"/>
    <property type="match status" value="1"/>
</dbReference>
<name>HIS51_CAMJJ</name>
<organism>
    <name type="scientific">Campylobacter jejuni subsp. jejuni serotype O:23/36 (strain 81-176)</name>
    <dbReference type="NCBI Taxonomy" id="354242"/>
    <lineage>
        <taxon>Bacteria</taxon>
        <taxon>Pseudomonadati</taxon>
        <taxon>Campylobacterota</taxon>
        <taxon>Epsilonproteobacteria</taxon>
        <taxon>Campylobacterales</taxon>
        <taxon>Campylobacteraceae</taxon>
        <taxon>Campylobacter</taxon>
    </lineage>
</organism>
<evidence type="ECO:0000250" key="1"/>
<accession>A1W0U9</accession>
<accession>Q939J6</accession>
<accession>Q9PMY4</accession>
<sequence>MIALIDYKAGNLNSVAKAFEKIGAINFIAKNPKDLQKADKLLLPGVGSFKEAMKNLKELGFIEALKEQVLVQKKPILGICLGMQLFLERGYEGGVCEGLGFIEGEVVKFEEDLNLKIPHMGWNELEILKQDPLYQGINNKSDFYFVHSFYVKCKDEFVSAKAQYGHKFVASLQKDRIFATQFHPEKSQNLGLKLLENFARL</sequence>
<gene>
    <name type="primary">hisH1</name>
    <name type="synonym">hisH-1</name>
    <name type="ordered locus">CJJ81176_1332</name>
</gene>
<reference key="1">
    <citation type="journal article" date="2001" name="J. Biol. Chem.">
        <title>Identification of the carbohydrate moieties and glycosylation motifs in Campylobacter jejuni flagellin.</title>
        <authorList>
            <person name="Thibault P."/>
            <person name="Logan S.M."/>
            <person name="Kelly J.F."/>
            <person name="Brisson J.-R."/>
            <person name="Ewing C.P."/>
            <person name="Trust T.J."/>
            <person name="Guerry P."/>
        </authorList>
    </citation>
    <scope>NUCLEOTIDE SEQUENCE [GENOMIC DNA]</scope>
</reference>
<reference key="2">
    <citation type="submission" date="2006-12" db="EMBL/GenBank/DDBJ databases">
        <authorList>
            <person name="Fouts D.E."/>
            <person name="Nelson K.E."/>
            <person name="Sebastian Y."/>
        </authorList>
    </citation>
    <scope>NUCLEOTIDE SEQUENCE [LARGE SCALE GENOMIC DNA]</scope>
    <source>
        <strain>81-176</strain>
    </source>
</reference>
<feature type="chain" id="PRO_0000281903" description="Imidazole glycerol phosphate synthase subunit HisH 1">
    <location>
        <begin position="1"/>
        <end position="201"/>
    </location>
</feature>
<feature type="domain" description="Glutamine amidotransferase type-1">
    <location>
        <begin position="1"/>
        <end position="201"/>
    </location>
</feature>
<feature type="active site" description="Nucleophile" evidence="1">
    <location>
        <position position="80"/>
    </location>
</feature>
<feature type="active site" evidence="1">
    <location>
        <position position="183"/>
    </location>
</feature>
<feature type="active site" evidence="1">
    <location>
        <position position="185"/>
    </location>
</feature>
<comment type="function">
    <text evidence="1">IGPS catalyzes the conversion of PRFAR and glutamine to IGP, AICAR and glutamate. The HisH subunit provides the glutamine amidotransferase activity that produces the ammonia necessary to HisF for the synthesis of IGP and AICAR (By similarity).</text>
</comment>
<comment type="catalytic activity">
    <reaction>
        <text>5-[(5-phospho-1-deoxy-D-ribulos-1-ylimino)methylamino]-1-(5-phospho-beta-D-ribosyl)imidazole-4-carboxamide + L-glutamine = D-erythro-1-(imidazol-4-yl)glycerol 3-phosphate + 5-amino-1-(5-phospho-beta-D-ribosyl)imidazole-4-carboxamide + L-glutamate + H(+)</text>
        <dbReference type="Rhea" id="RHEA:24793"/>
        <dbReference type="ChEBI" id="CHEBI:15378"/>
        <dbReference type="ChEBI" id="CHEBI:29985"/>
        <dbReference type="ChEBI" id="CHEBI:58278"/>
        <dbReference type="ChEBI" id="CHEBI:58359"/>
        <dbReference type="ChEBI" id="CHEBI:58475"/>
        <dbReference type="ChEBI" id="CHEBI:58525"/>
        <dbReference type="EC" id="4.3.2.10"/>
    </reaction>
</comment>
<comment type="catalytic activity">
    <reaction>
        <text>L-glutamine + H2O = L-glutamate + NH4(+)</text>
        <dbReference type="Rhea" id="RHEA:15889"/>
        <dbReference type="ChEBI" id="CHEBI:15377"/>
        <dbReference type="ChEBI" id="CHEBI:28938"/>
        <dbReference type="ChEBI" id="CHEBI:29985"/>
        <dbReference type="ChEBI" id="CHEBI:58359"/>
        <dbReference type="EC" id="3.5.1.2"/>
    </reaction>
</comment>
<comment type="pathway">
    <text>Amino-acid biosynthesis; L-histidine biosynthesis; L-histidine from 5-phospho-alpha-D-ribose 1-diphosphate: step 5/9.</text>
</comment>
<comment type="subunit">
    <text evidence="1">Heterodimer of HisH and HisF.</text>
</comment>
<comment type="subcellular location">
    <subcellularLocation>
        <location evidence="1">Cytoplasm</location>
    </subcellularLocation>
</comment>
<keyword id="KW-0028">Amino-acid biosynthesis</keyword>
<keyword id="KW-0963">Cytoplasm</keyword>
<keyword id="KW-0315">Glutamine amidotransferase</keyword>
<keyword id="KW-0368">Histidine biosynthesis</keyword>
<keyword id="KW-0378">Hydrolase</keyword>
<keyword id="KW-0456">Lyase</keyword>
<proteinExistence type="inferred from homology"/>
<protein>
    <recommendedName>
        <fullName>Imidazole glycerol phosphate synthase subunit HisH 1</fullName>
        <ecNumber>4.3.2.10</ecNumber>
    </recommendedName>
    <alternativeName>
        <fullName>IGP synthase glutaminase subunit 1</fullName>
        <ecNumber>3.5.1.2</ecNumber>
    </alternativeName>
    <alternativeName>
        <fullName>IGP synthase subunit HisH 1</fullName>
    </alternativeName>
    <alternativeName>
        <fullName>ImGP synthase subunit HisH 1</fullName>
        <shortName>IGPS subunit HisH 1</shortName>
    </alternativeName>
</protein>